<comment type="function">
    <text evidence="1">One of the primary rRNA binding proteins, it binds directly to 16S rRNA where it nucleates assembly of the body of the 30S subunit.</text>
</comment>
<comment type="function">
    <text evidence="1">With S5 and S12 plays an important role in translational accuracy.</text>
</comment>
<comment type="subunit">
    <text evidence="1">Part of the 30S ribosomal subunit. Contacts protein S5. The interaction surface between S4 and S5 is involved in control of translational fidelity.</text>
</comment>
<comment type="similarity">
    <text evidence="1">Belongs to the universal ribosomal protein uS4 family.</text>
</comment>
<dbReference type="EMBL" id="AM494475">
    <property type="protein sequence ID" value="CAM79558.1"/>
    <property type="molecule type" value="Genomic_DNA"/>
</dbReference>
<dbReference type="RefSeq" id="WP_011944513.1">
    <property type="nucleotide sequence ID" value="NC_009488.1"/>
</dbReference>
<dbReference type="SMR" id="A5CCV1"/>
<dbReference type="KEGG" id="ots:OTBS_0492"/>
<dbReference type="eggNOG" id="COG0522">
    <property type="taxonomic scope" value="Bacteria"/>
</dbReference>
<dbReference type="HOGENOM" id="CLU_092403_0_0_5"/>
<dbReference type="Proteomes" id="UP000001565">
    <property type="component" value="Chromosome"/>
</dbReference>
<dbReference type="GO" id="GO:0015935">
    <property type="term" value="C:small ribosomal subunit"/>
    <property type="evidence" value="ECO:0007669"/>
    <property type="project" value="InterPro"/>
</dbReference>
<dbReference type="GO" id="GO:0019843">
    <property type="term" value="F:rRNA binding"/>
    <property type="evidence" value="ECO:0007669"/>
    <property type="project" value="UniProtKB-UniRule"/>
</dbReference>
<dbReference type="GO" id="GO:0003735">
    <property type="term" value="F:structural constituent of ribosome"/>
    <property type="evidence" value="ECO:0007669"/>
    <property type="project" value="InterPro"/>
</dbReference>
<dbReference type="GO" id="GO:0042274">
    <property type="term" value="P:ribosomal small subunit biogenesis"/>
    <property type="evidence" value="ECO:0007669"/>
    <property type="project" value="TreeGrafter"/>
</dbReference>
<dbReference type="GO" id="GO:0006412">
    <property type="term" value="P:translation"/>
    <property type="evidence" value="ECO:0007669"/>
    <property type="project" value="UniProtKB-UniRule"/>
</dbReference>
<dbReference type="CDD" id="cd00165">
    <property type="entry name" value="S4"/>
    <property type="match status" value="1"/>
</dbReference>
<dbReference type="FunFam" id="3.10.290.10:FF:000001">
    <property type="entry name" value="30S ribosomal protein S4"/>
    <property type="match status" value="1"/>
</dbReference>
<dbReference type="Gene3D" id="1.10.1050.10">
    <property type="entry name" value="Ribosomal Protein S4 Delta 41, Chain A, domain 1"/>
    <property type="match status" value="1"/>
</dbReference>
<dbReference type="Gene3D" id="3.10.290.10">
    <property type="entry name" value="RNA-binding S4 domain"/>
    <property type="match status" value="1"/>
</dbReference>
<dbReference type="HAMAP" id="MF_01306_B">
    <property type="entry name" value="Ribosomal_uS4_B"/>
    <property type="match status" value="1"/>
</dbReference>
<dbReference type="InterPro" id="IPR022801">
    <property type="entry name" value="Ribosomal_uS4"/>
</dbReference>
<dbReference type="InterPro" id="IPR005709">
    <property type="entry name" value="Ribosomal_uS4_bac-type"/>
</dbReference>
<dbReference type="InterPro" id="IPR018079">
    <property type="entry name" value="Ribosomal_uS4_CS"/>
</dbReference>
<dbReference type="InterPro" id="IPR001912">
    <property type="entry name" value="Ribosomal_uS4_N"/>
</dbReference>
<dbReference type="InterPro" id="IPR002942">
    <property type="entry name" value="S4_RNA-bd"/>
</dbReference>
<dbReference type="InterPro" id="IPR036986">
    <property type="entry name" value="S4_RNA-bd_sf"/>
</dbReference>
<dbReference type="NCBIfam" id="NF003717">
    <property type="entry name" value="PRK05327.1"/>
    <property type="match status" value="1"/>
</dbReference>
<dbReference type="NCBIfam" id="TIGR01017">
    <property type="entry name" value="rpsD_bact"/>
    <property type="match status" value="1"/>
</dbReference>
<dbReference type="PANTHER" id="PTHR11831">
    <property type="entry name" value="30S 40S RIBOSOMAL PROTEIN"/>
    <property type="match status" value="1"/>
</dbReference>
<dbReference type="PANTHER" id="PTHR11831:SF4">
    <property type="entry name" value="SMALL RIBOSOMAL SUBUNIT PROTEIN US4M"/>
    <property type="match status" value="1"/>
</dbReference>
<dbReference type="Pfam" id="PF00163">
    <property type="entry name" value="Ribosomal_S4"/>
    <property type="match status" value="1"/>
</dbReference>
<dbReference type="Pfam" id="PF01479">
    <property type="entry name" value="S4"/>
    <property type="match status" value="1"/>
</dbReference>
<dbReference type="SMART" id="SM01390">
    <property type="entry name" value="Ribosomal_S4"/>
    <property type="match status" value="1"/>
</dbReference>
<dbReference type="SMART" id="SM00363">
    <property type="entry name" value="S4"/>
    <property type="match status" value="1"/>
</dbReference>
<dbReference type="SUPFAM" id="SSF55174">
    <property type="entry name" value="Alpha-L RNA-binding motif"/>
    <property type="match status" value="1"/>
</dbReference>
<dbReference type="PROSITE" id="PS00632">
    <property type="entry name" value="RIBOSOMAL_S4"/>
    <property type="match status" value="1"/>
</dbReference>
<dbReference type="PROSITE" id="PS50889">
    <property type="entry name" value="S4"/>
    <property type="match status" value="1"/>
</dbReference>
<reference key="1">
    <citation type="journal article" date="2007" name="Proc. Natl. Acad. Sci. U.S.A.">
        <title>The Orientia tsutsugamushi genome reveals massive proliferation of conjugative type IV secretion system and host-cell interaction genes.</title>
        <authorList>
            <person name="Cho N.-H."/>
            <person name="Kim H.-R."/>
            <person name="Lee J.-H."/>
            <person name="Kim S.-Y."/>
            <person name="Kim J."/>
            <person name="Cha S."/>
            <person name="Kim S.-Y."/>
            <person name="Darby A.C."/>
            <person name="Fuxelius H.-H."/>
            <person name="Yin J."/>
            <person name="Kim J.H."/>
            <person name="Kim J."/>
            <person name="Lee S.J."/>
            <person name="Koh Y.-S."/>
            <person name="Jang W.-J."/>
            <person name="Park K.-H."/>
            <person name="Andersson S.G.E."/>
            <person name="Choi M.-S."/>
            <person name="Kim I.-S."/>
        </authorList>
    </citation>
    <scope>NUCLEOTIDE SEQUENCE [LARGE SCALE GENOMIC DNA]</scope>
    <source>
        <strain>Boryong</strain>
    </source>
</reference>
<name>RS4_ORITB</name>
<proteinExistence type="inferred from homology"/>
<sequence>MTKVIKSKYKVSRRLGTSVWGHEKDAINNKNYKPGQQGNSSSISKPSDYSKHLIAKQRLKSHYGRISEKQFRNTFKIARKKSGNTAENLVGLLERRLDAVVYRLNIAPTIFAARQLVSHKHIKVNGKKINIASYRVKAGDSIELSEQAKQIPIVIGAISKKARRIPEYLAFDDEKFIGNFIRMPSSISEVPYPFDPQINLVVEFYSA</sequence>
<keyword id="KW-1185">Reference proteome</keyword>
<keyword id="KW-0687">Ribonucleoprotein</keyword>
<keyword id="KW-0689">Ribosomal protein</keyword>
<keyword id="KW-0694">RNA-binding</keyword>
<keyword id="KW-0699">rRNA-binding</keyword>
<feature type="chain" id="PRO_0000322315" description="Small ribosomal subunit protein uS4">
    <location>
        <begin position="1"/>
        <end position="207"/>
    </location>
</feature>
<feature type="domain" description="S4 RNA-binding" evidence="1">
    <location>
        <begin position="95"/>
        <end position="158"/>
    </location>
</feature>
<feature type="region of interest" description="Disordered" evidence="2">
    <location>
        <begin position="26"/>
        <end position="47"/>
    </location>
</feature>
<feature type="compositionally biased region" description="Polar residues" evidence="2">
    <location>
        <begin position="28"/>
        <end position="39"/>
    </location>
</feature>
<gene>
    <name evidence="1" type="primary">rpsD</name>
    <name type="ordered locus">OTBS_0492</name>
</gene>
<protein>
    <recommendedName>
        <fullName evidence="1">Small ribosomal subunit protein uS4</fullName>
    </recommendedName>
    <alternativeName>
        <fullName evidence="3">30S ribosomal protein S4</fullName>
    </alternativeName>
</protein>
<evidence type="ECO:0000255" key="1">
    <source>
        <dbReference type="HAMAP-Rule" id="MF_01306"/>
    </source>
</evidence>
<evidence type="ECO:0000256" key="2">
    <source>
        <dbReference type="SAM" id="MobiDB-lite"/>
    </source>
</evidence>
<evidence type="ECO:0000305" key="3"/>
<organism>
    <name type="scientific">Orientia tsutsugamushi (strain Boryong)</name>
    <name type="common">Rickettsia tsutsugamushi</name>
    <dbReference type="NCBI Taxonomy" id="357244"/>
    <lineage>
        <taxon>Bacteria</taxon>
        <taxon>Pseudomonadati</taxon>
        <taxon>Pseudomonadota</taxon>
        <taxon>Alphaproteobacteria</taxon>
        <taxon>Rickettsiales</taxon>
        <taxon>Rickettsiaceae</taxon>
        <taxon>Rickettsieae</taxon>
        <taxon>Orientia</taxon>
    </lineage>
</organism>
<accession>A5CCV1</accession>